<comment type="similarity">
    <text evidence="1">Belongs to the eukaryotic ribosomal protein eS6 family.</text>
</comment>
<reference key="1">
    <citation type="journal article" date="2009" name="Proc. Natl. Acad. Sci. U.S.A.">
        <title>Biogeography of the Sulfolobus islandicus pan-genome.</title>
        <authorList>
            <person name="Reno M.L."/>
            <person name="Held N.L."/>
            <person name="Fields C.J."/>
            <person name="Burke P.V."/>
            <person name="Whitaker R.J."/>
        </authorList>
    </citation>
    <scope>NUCLEOTIDE SEQUENCE [LARGE SCALE GENOMIC DNA]</scope>
    <source>
        <strain>M.16.4 / Kamchatka #3</strain>
    </source>
</reference>
<sequence>MPDFKIVISDPQSVEPKRIKVKVKANDQIKSIAGEKEGKAVPQAKVNEKTKQLLNIDTLITLEITKQEGDKKVKVKSHFKVEVDNNVPDNEVWISKTMAEKFGAEDFEAIAYRTKTLQISIDQDKATNLVGLKIGDTFEANQLIGLPVKLKITGGSDNSGFPMRFDVTGAAKRKILLSGPPGFYPNEDGERRRKTIRGNTISQEIVQINTIIVR</sequence>
<name>RS6E_SACI6</name>
<proteinExistence type="inferred from homology"/>
<protein>
    <recommendedName>
        <fullName evidence="1">Small ribosomal subunit protein eS6</fullName>
    </recommendedName>
    <alternativeName>
        <fullName evidence="2">30S ribosomal protein S6e</fullName>
    </alternativeName>
</protein>
<accession>C4KID0</accession>
<feature type="chain" id="PRO_1000206623" description="Small ribosomal subunit protein eS6">
    <location>
        <begin position="1"/>
        <end position="214"/>
    </location>
</feature>
<evidence type="ECO:0000255" key="1">
    <source>
        <dbReference type="HAMAP-Rule" id="MF_00512"/>
    </source>
</evidence>
<evidence type="ECO:0000305" key="2"/>
<dbReference type="EMBL" id="CP001402">
    <property type="protein sequence ID" value="ACR42344.1"/>
    <property type="molecule type" value="Genomic_DNA"/>
</dbReference>
<dbReference type="RefSeq" id="WP_012711673.1">
    <property type="nucleotide sequence ID" value="NC_012726.1"/>
</dbReference>
<dbReference type="SMR" id="C4KID0"/>
<dbReference type="KEGG" id="sid:M164_1740"/>
<dbReference type="HOGENOM" id="CLU_1275302_0_0_2"/>
<dbReference type="Proteomes" id="UP000001479">
    <property type="component" value="Chromosome"/>
</dbReference>
<dbReference type="GO" id="GO:1990904">
    <property type="term" value="C:ribonucleoprotein complex"/>
    <property type="evidence" value="ECO:0007669"/>
    <property type="project" value="UniProtKB-KW"/>
</dbReference>
<dbReference type="GO" id="GO:0005840">
    <property type="term" value="C:ribosome"/>
    <property type="evidence" value="ECO:0007669"/>
    <property type="project" value="UniProtKB-KW"/>
</dbReference>
<dbReference type="GO" id="GO:0003735">
    <property type="term" value="F:structural constituent of ribosome"/>
    <property type="evidence" value="ECO:0007669"/>
    <property type="project" value="InterPro"/>
</dbReference>
<dbReference type="GO" id="GO:0006412">
    <property type="term" value="P:translation"/>
    <property type="evidence" value="ECO:0007669"/>
    <property type="project" value="UniProtKB-UniRule"/>
</dbReference>
<dbReference type="HAMAP" id="MF_00512">
    <property type="entry name" value="Ribosomal_eS6"/>
    <property type="match status" value="1"/>
</dbReference>
<dbReference type="InterPro" id="IPR001377">
    <property type="entry name" value="Ribosomal_eS6"/>
</dbReference>
<dbReference type="InterPro" id="IPR020924">
    <property type="entry name" value="Ribosomal_eS6_arc"/>
</dbReference>
<dbReference type="InterPro" id="IPR018282">
    <property type="entry name" value="Ribosomal_eS6_CS"/>
</dbReference>
<dbReference type="NCBIfam" id="NF003292">
    <property type="entry name" value="PRK04290.1-1"/>
    <property type="match status" value="1"/>
</dbReference>
<dbReference type="PANTHER" id="PTHR11502">
    <property type="entry name" value="40S RIBOSOMAL PROTEIN S6"/>
    <property type="match status" value="1"/>
</dbReference>
<dbReference type="Pfam" id="PF01092">
    <property type="entry name" value="Ribosomal_S6e"/>
    <property type="match status" value="1"/>
</dbReference>
<dbReference type="SMART" id="SM01405">
    <property type="entry name" value="Ribosomal_S6e"/>
    <property type="match status" value="1"/>
</dbReference>
<dbReference type="PROSITE" id="PS00578">
    <property type="entry name" value="RIBOSOMAL_S6E"/>
    <property type="match status" value="1"/>
</dbReference>
<gene>
    <name evidence="1" type="primary">rps6e</name>
    <name type="ordered locus">M164_1740</name>
</gene>
<organism>
    <name type="scientific">Saccharolobus islandicus (strain M.16.4 / Kamchatka #3)</name>
    <name type="common">Sulfolobus islandicus</name>
    <dbReference type="NCBI Taxonomy" id="426118"/>
    <lineage>
        <taxon>Archaea</taxon>
        <taxon>Thermoproteota</taxon>
        <taxon>Thermoprotei</taxon>
        <taxon>Sulfolobales</taxon>
        <taxon>Sulfolobaceae</taxon>
        <taxon>Saccharolobus</taxon>
    </lineage>
</organism>
<keyword id="KW-0687">Ribonucleoprotein</keyword>
<keyword id="KW-0689">Ribosomal protein</keyword>